<proteinExistence type="evidence at protein level"/>
<gene>
    <name evidence="10 11" type="primary">PMX</name>
    <name evidence="14" type="ORF">PF3D7_0808200</name>
</gene>
<keyword id="KW-0002">3D-structure</keyword>
<keyword id="KW-0064">Aspartyl protease</keyword>
<keyword id="KW-0968">Cytoplasmic vesicle</keyword>
<keyword id="KW-1015">Disulfide bond</keyword>
<keyword id="KW-0325">Glycoprotein</keyword>
<keyword id="KW-0378">Hydrolase</keyword>
<keyword id="KW-0645">Protease</keyword>
<keyword id="KW-1185">Reference proteome</keyword>
<keyword id="KW-0732">Signal</keyword>
<keyword id="KW-0865">Zymogen</keyword>
<name>PLM10_PLAF7</name>
<dbReference type="EC" id="3.4.23.-" evidence="6 7 9"/>
<dbReference type="EMBL" id="AL844507">
    <property type="protein sequence ID" value="CAD51290.1"/>
    <property type="molecule type" value="Genomic_DNA"/>
</dbReference>
<dbReference type="RefSeq" id="XP_001349441.1">
    <property type="nucleotide sequence ID" value="XM_001349405.1"/>
</dbReference>
<dbReference type="PDB" id="7RY7">
    <property type="method" value="X-ray"/>
    <property type="resolution" value="2.10 A"/>
    <property type="chains" value="A=28-573"/>
</dbReference>
<dbReference type="PDB" id="7TBB">
    <property type="method" value="X-ray"/>
    <property type="resolution" value="1.85 A"/>
    <property type="chains" value="A=212-573"/>
</dbReference>
<dbReference type="PDB" id="7TBC">
    <property type="method" value="X-ray"/>
    <property type="resolution" value="2.76 A"/>
    <property type="chains" value="A=212-573"/>
</dbReference>
<dbReference type="PDB" id="8DSR">
    <property type="method" value="X-ray"/>
    <property type="resolution" value="2.85 A"/>
    <property type="chains" value="A/B=225-573"/>
</dbReference>
<dbReference type="PDBsum" id="7RY7"/>
<dbReference type="PDBsum" id="7TBB"/>
<dbReference type="PDBsum" id="7TBC"/>
<dbReference type="PDBsum" id="8DSR"/>
<dbReference type="SMR" id="Q8IAS0"/>
<dbReference type="FunCoup" id="Q8IAS0">
    <property type="interactions" value="1"/>
</dbReference>
<dbReference type="IntAct" id="Q8IAS0">
    <property type="interactions" value="2"/>
</dbReference>
<dbReference type="STRING" id="36329.Q8IAS0"/>
<dbReference type="BindingDB" id="Q8IAS0"/>
<dbReference type="ChEMBL" id="CHEMBL4523390"/>
<dbReference type="DrugBank" id="DB17096">
    <property type="generic name" value="UCB7362"/>
</dbReference>
<dbReference type="GuidetoPHARMACOLOGY" id="3071"/>
<dbReference type="MEROPS" id="A01.A93"/>
<dbReference type="GlyCosmos" id="Q8IAS0">
    <property type="glycosylation" value="1 site, No reported glycans"/>
</dbReference>
<dbReference type="iPTMnet" id="Q8IAS0"/>
<dbReference type="PaxDb" id="5833-PF08_0108"/>
<dbReference type="EnsemblProtists" id="CAD51290">
    <property type="protein sequence ID" value="CAD51290"/>
    <property type="gene ID" value="PF3D7_0808200"/>
</dbReference>
<dbReference type="GeneID" id="2655308"/>
<dbReference type="KEGG" id="pfa:PF3D7_0808200"/>
<dbReference type="VEuPathDB" id="PlasmoDB:PF3D7_0808200"/>
<dbReference type="HOGENOM" id="CLU_500120_0_0_1"/>
<dbReference type="InParanoid" id="Q8IAS0"/>
<dbReference type="OMA" id="ECSACLF"/>
<dbReference type="OrthoDB" id="771136at2759"/>
<dbReference type="PhylomeDB" id="Q8IAS0"/>
<dbReference type="Reactome" id="R-PFA-2132295">
    <property type="pathway name" value="MHC class II antigen presentation"/>
</dbReference>
<dbReference type="Reactome" id="R-PFA-6798695">
    <property type="pathway name" value="Neutrophil degranulation"/>
</dbReference>
<dbReference type="Proteomes" id="UP000001450">
    <property type="component" value="Chromosome 8"/>
</dbReference>
<dbReference type="GO" id="GO:0005764">
    <property type="term" value="C:lysosome"/>
    <property type="evidence" value="ECO:0000318"/>
    <property type="project" value="GO_Central"/>
</dbReference>
<dbReference type="GO" id="GO:0030133">
    <property type="term" value="C:transport vesicle"/>
    <property type="evidence" value="ECO:0007669"/>
    <property type="project" value="UniProtKB-SubCell"/>
</dbReference>
<dbReference type="GO" id="GO:0004190">
    <property type="term" value="F:aspartic-type endopeptidase activity"/>
    <property type="evidence" value="ECO:0000314"/>
    <property type="project" value="UniProtKB"/>
</dbReference>
<dbReference type="GO" id="GO:0085017">
    <property type="term" value="P:entry into host cell by a symbiont-containing vacuole"/>
    <property type="evidence" value="ECO:0000316"/>
    <property type="project" value="UniProtKB"/>
</dbReference>
<dbReference type="GO" id="GO:0016540">
    <property type="term" value="P:protein autoprocessing"/>
    <property type="evidence" value="ECO:0000314"/>
    <property type="project" value="UniProtKB"/>
</dbReference>
<dbReference type="GO" id="GO:0016485">
    <property type="term" value="P:protein processing"/>
    <property type="evidence" value="ECO:0000314"/>
    <property type="project" value="UniProtKB"/>
</dbReference>
<dbReference type="GO" id="GO:0006508">
    <property type="term" value="P:proteolysis"/>
    <property type="evidence" value="ECO:0000250"/>
    <property type="project" value="GeneDB"/>
</dbReference>
<dbReference type="CDD" id="cd05471">
    <property type="entry name" value="pepsin_like"/>
    <property type="match status" value="1"/>
</dbReference>
<dbReference type="FunFam" id="2.40.70.10:FF:000082">
    <property type="entry name" value="Plasmepsin X"/>
    <property type="match status" value="1"/>
</dbReference>
<dbReference type="Gene3D" id="2.40.70.10">
    <property type="entry name" value="Acid Proteases"/>
    <property type="match status" value="2"/>
</dbReference>
<dbReference type="InterPro" id="IPR001461">
    <property type="entry name" value="Aspartic_peptidase_A1"/>
</dbReference>
<dbReference type="InterPro" id="IPR001969">
    <property type="entry name" value="Aspartic_peptidase_AS"/>
</dbReference>
<dbReference type="InterPro" id="IPR034164">
    <property type="entry name" value="Pepsin-like_dom"/>
</dbReference>
<dbReference type="InterPro" id="IPR033121">
    <property type="entry name" value="PEPTIDASE_A1"/>
</dbReference>
<dbReference type="InterPro" id="IPR021109">
    <property type="entry name" value="Peptidase_aspartic_dom_sf"/>
</dbReference>
<dbReference type="PANTHER" id="PTHR47966">
    <property type="entry name" value="BETA-SITE APP-CLEAVING ENZYME, ISOFORM A-RELATED"/>
    <property type="match status" value="1"/>
</dbReference>
<dbReference type="PANTHER" id="PTHR47966:SF51">
    <property type="entry name" value="BETA-SITE APP-CLEAVING ENZYME, ISOFORM A-RELATED"/>
    <property type="match status" value="1"/>
</dbReference>
<dbReference type="Pfam" id="PF00026">
    <property type="entry name" value="Asp"/>
    <property type="match status" value="1"/>
</dbReference>
<dbReference type="PRINTS" id="PR00792">
    <property type="entry name" value="PEPSIN"/>
</dbReference>
<dbReference type="SUPFAM" id="SSF50630">
    <property type="entry name" value="Acid proteases"/>
    <property type="match status" value="1"/>
</dbReference>
<dbReference type="PROSITE" id="PS00141">
    <property type="entry name" value="ASP_PROTEASE"/>
    <property type="match status" value="1"/>
</dbReference>
<dbReference type="PROSITE" id="PS51767">
    <property type="entry name" value="PEPTIDASE_A1"/>
    <property type="match status" value="1"/>
</dbReference>
<evidence type="ECO:0000250" key="1">
    <source>
        <dbReference type="UniProtKB" id="W7JWW5"/>
    </source>
</evidence>
<evidence type="ECO:0000255" key="2"/>
<evidence type="ECO:0000255" key="3">
    <source>
        <dbReference type="PROSITE-ProRule" id="PRU01103"/>
    </source>
</evidence>
<evidence type="ECO:0000255" key="4">
    <source>
        <dbReference type="RuleBase" id="RU000454"/>
    </source>
</evidence>
<evidence type="ECO:0000256" key="5">
    <source>
        <dbReference type="SAM" id="MobiDB-lite"/>
    </source>
</evidence>
<evidence type="ECO:0000269" key="6">
    <source>
    </source>
</evidence>
<evidence type="ECO:0000269" key="7">
    <source>
    </source>
</evidence>
<evidence type="ECO:0000269" key="8">
    <source>
    </source>
</evidence>
<evidence type="ECO:0000269" key="9">
    <source>
    </source>
</evidence>
<evidence type="ECO:0000303" key="10">
    <source>
    </source>
</evidence>
<evidence type="ECO:0000303" key="11">
    <source>
    </source>
</evidence>
<evidence type="ECO:0000305" key="12"/>
<evidence type="ECO:0000305" key="13">
    <source>
    </source>
</evidence>
<evidence type="ECO:0000312" key="14">
    <source>
        <dbReference type="EMBL" id="CAD51290.1"/>
    </source>
</evidence>
<evidence type="ECO:0000312" key="15">
    <source>
        <dbReference type="Proteomes" id="UP000001450"/>
    </source>
</evidence>
<evidence type="ECO:0007744" key="16">
    <source>
        <dbReference type="PDB" id="7RY7"/>
    </source>
</evidence>
<evidence type="ECO:0007829" key="17">
    <source>
        <dbReference type="PDB" id="7RY7"/>
    </source>
</evidence>
<evidence type="ECO:0007829" key="18">
    <source>
        <dbReference type="PDB" id="7TBB"/>
    </source>
</evidence>
<evidence type="ECO:0007829" key="19">
    <source>
        <dbReference type="PDB" id="7TBC"/>
    </source>
</evidence>
<evidence type="ECO:0007829" key="20">
    <source>
        <dbReference type="PDB" id="8DSR"/>
    </source>
</evidence>
<accession>Q8IAS0</accession>
<organism evidence="15">
    <name type="scientific">Plasmodium falciparum (isolate 3D7)</name>
    <dbReference type="NCBI Taxonomy" id="36329"/>
    <lineage>
        <taxon>Eukaryota</taxon>
        <taxon>Sar</taxon>
        <taxon>Alveolata</taxon>
        <taxon>Apicomplexa</taxon>
        <taxon>Aconoidasida</taxon>
        <taxon>Haemosporida</taxon>
        <taxon>Plasmodiidae</taxon>
        <taxon>Plasmodium</taxon>
        <taxon>Plasmodium (Laverania)</taxon>
    </lineage>
</organism>
<feature type="signal peptide" evidence="2">
    <location>
        <begin position="1"/>
        <end position="26"/>
    </location>
</feature>
<feature type="propeptide" id="PRO_0000453739" evidence="13">
    <location>
        <begin position="27"/>
        <end position="221"/>
    </location>
</feature>
<feature type="chain" id="PRO_0000453740" description="Plasmepsin X" evidence="2">
    <location>
        <begin position="222"/>
        <end position="573"/>
    </location>
</feature>
<feature type="domain" description="Peptidase A1" evidence="3">
    <location>
        <begin position="248"/>
        <end position="567"/>
    </location>
</feature>
<feature type="region of interest" description="Disordered" evidence="5">
    <location>
        <begin position="167"/>
        <end position="211"/>
    </location>
</feature>
<feature type="compositionally biased region" description="Acidic residues" evidence="5">
    <location>
        <begin position="183"/>
        <end position="203"/>
    </location>
</feature>
<feature type="active site" evidence="3">
    <location>
        <position position="266"/>
    </location>
</feature>
<feature type="active site" evidence="3">
    <location>
        <position position="457"/>
    </location>
</feature>
<feature type="site" description="Cleavage" evidence="8">
    <location>
        <begin position="131"/>
        <end position="132"/>
    </location>
</feature>
<feature type="site" description="Cleavage" evidence="8">
    <location>
        <begin position="220"/>
        <end position="221"/>
    </location>
</feature>
<feature type="glycosylation site" description="N-linked (GlcNAc...) asparagine" evidence="8 16">
    <location>
        <position position="334"/>
    </location>
</feature>
<feature type="disulfide bond" evidence="8 16">
    <location>
        <begin position="39"/>
        <end position="51"/>
    </location>
</feature>
<feature type="disulfide bond" evidence="8 16">
    <location>
        <begin position="42"/>
        <end position="48"/>
    </location>
</feature>
<feature type="disulfide bond" evidence="8 16">
    <location>
        <begin position="279"/>
        <end position="284"/>
    </location>
</feature>
<feature type="disulfide bond" evidence="8 16">
    <location>
        <begin position="447"/>
        <end position="448"/>
    </location>
</feature>
<feature type="disulfide bond" evidence="8 16">
    <location>
        <begin position="482"/>
        <end position="521"/>
    </location>
</feature>
<feature type="mutagenesis site" description="Loss of catalytic activity." evidence="6">
    <original>D</original>
    <variation>A</variation>
    <location>
        <position position="266"/>
    </location>
</feature>
<feature type="strand" evidence="17">
    <location>
        <begin position="29"/>
        <end position="31"/>
    </location>
</feature>
<feature type="helix" evidence="17">
    <location>
        <begin position="39"/>
        <end position="41"/>
    </location>
</feature>
<feature type="turn" evidence="17">
    <location>
        <begin position="45"/>
        <end position="47"/>
    </location>
</feature>
<feature type="strand" evidence="17">
    <location>
        <begin position="60"/>
        <end position="66"/>
    </location>
</feature>
<feature type="helix" evidence="17">
    <location>
        <begin position="75"/>
        <end position="82"/>
    </location>
</feature>
<feature type="turn" evidence="17">
    <location>
        <begin position="83"/>
        <end position="86"/>
    </location>
</feature>
<feature type="strand" evidence="17">
    <location>
        <begin position="89"/>
        <end position="92"/>
    </location>
</feature>
<feature type="helix" evidence="17">
    <location>
        <begin position="99"/>
        <end position="101"/>
    </location>
</feature>
<feature type="helix" evidence="17">
    <location>
        <begin position="111"/>
        <end position="113"/>
    </location>
</feature>
<feature type="helix" evidence="17">
    <location>
        <begin position="114"/>
        <end position="128"/>
    </location>
</feature>
<feature type="strand" evidence="18">
    <location>
        <begin position="236"/>
        <end position="242"/>
    </location>
</feature>
<feature type="strand" evidence="18">
    <location>
        <begin position="244"/>
        <end position="246"/>
    </location>
</feature>
<feature type="strand" evidence="18">
    <location>
        <begin position="248"/>
        <end position="250"/>
    </location>
</feature>
<feature type="strand" evidence="18">
    <location>
        <begin position="252"/>
        <end position="254"/>
    </location>
</feature>
<feature type="turn" evidence="18">
    <location>
        <begin position="255"/>
        <end position="258"/>
    </location>
</feature>
<feature type="strand" evidence="18">
    <location>
        <begin position="259"/>
        <end position="261"/>
    </location>
</feature>
<feature type="strand" evidence="18">
    <location>
        <begin position="264"/>
        <end position="266"/>
    </location>
</feature>
<feature type="strand" evidence="18">
    <location>
        <begin position="272"/>
        <end position="276"/>
    </location>
</feature>
<feature type="helix" evidence="18">
    <location>
        <begin position="282"/>
        <end position="285"/>
    </location>
</feature>
<feature type="helix" evidence="18">
    <location>
        <begin position="292"/>
        <end position="294"/>
    </location>
</feature>
<feature type="strand" evidence="18">
    <location>
        <begin position="307"/>
        <end position="311"/>
    </location>
</feature>
<feature type="strand" evidence="18">
    <location>
        <begin position="314"/>
        <end position="327"/>
    </location>
</feature>
<feature type="strand" evidence="18">
    <location>
        <begin position="330"/>
        <end position="343"/>
    </location>
</feature>
<feature type="strand" evidence="19">
    <location>
        <begin position="346"/>
        <end position="348"/>
    </location>
</feature>
<feature type="helix" evidence="18">
    <location>
        <begin position="354"/>
        <end position="357"/>
    </location>
</feature>
<feature type="strand" evidence="18">
    <location>
        <begin position="362"/>
        <end position="365"/>
    </location>
</feature>
<feature type="helix" evidence="18">
    <location>
        <begin position="369"/>
        <end position="371"/>
    </location>
</feature>
<feature type="strand" evidence="18">
    <location>
        <begin position="374"/>
        <end position="377"/>
    </location>
</feature>
<feature type="helix" evidence="18">
    <location>
        <begin position="379"/>
        <end position="386"/>
    </location>
</feature>
<feature type="strand" evidence="18">
    <location>
        <begin position="392"/>
        <end position="397"/>
    </location>
</feature>
<feature type="turn" evidence="18">
    <location>
        <begin position="400"/>
        <end position="403"/>
    </location>
</feature>
<feature type="strand" evidence="18">
    <location>
        <begin position="406"/>
        <end position="410"/>
    </location>
</feature>
<feature type="strand" evidence="18">
    <location>
        <begin position="416"/>
        <end position="428"/>
    </location>
</feature>
<feature type="turn" evidence="18">
    <location>
        <begin position="429"/>
        <end position="432"/>
    </location>
</feature>
<feature type="strand" evidence="18">
    <location>
        <begin position="433"/>
        <end position="436"/>
    </location>
</feature>
<feature type="strand" evidence="18">
    <location>
        <begin position="438"/>
        <end position="441"/>
    </location>
</feature>
<feature type="strand" evidence="18">
    <location>
        <begin position="444"/>
        <end position="447"/>
    </location>
</feature>
<feature type="strand" evidence="18">
    <location>
        <begin position="452"/>
        <end position="456"/>
    </location>
</feature>
<feature type="strand" evidence="18">
    <location>
        <begin position="461"/>
        <end position="465"/>
    </location>
</feature>
<feature type="helix" evidence="18">
    <location>
        <begin position="467"/>
        <end position="476"/>
    </location>
</feature>
<feature type="turn" evidence="18">
    <location>
        <begin position="484"/>
        <end position="486"/>
    </location>
</feature>
<feature type="helix" evidence="18">
    <location>
        <begin position="487"/>
        <end position="493"/>
    </location>
</feature>
<feature type="strand" evidence="18">
    <location>
        <begin position="497"/>
        <end position="501"/>
    </location>
</feature>
<feature type="strand" evidence="18">
    <location>
        <begin position="504"/>
        <end position="508"/>
    </location>
</feature>
<feature type="helix" evidence="18">
    <location>
        <begin position="510"/>
        <end position="513"/>
    </location>
</feature>
<feature type="strand" evidence="18">
    <location>
        <begin position="514"/>
        <end position="517"/>
    </location>
</feature>
<feature type="strand" evidence="18">
    <location>
        <begin position="520"/>
        <end position="523"/>
    </location>
</feature>
<feature type="strand" evidence="18">
    <location>
        <begin position="525"/>
        <end position="527"/>
    </location>
</feature>
<feature type="strand" evidence="20">
    <location>
        <begin position="532"/>
        <end position="535"/>
    </location>
</feature>
<feature type="strand" evidence="18">
    <location>
        <begin position="537"/>
        <end position="540"/>
    </location>
</feature>
<feature type="helix" evidence="18">
    <location>
        <begin position="542"/>
        <end position="548"/>
    </location>
</feature>
<feature type="strand" evidence="18">
    <location>
        <begin position="549"/>
        <end position="554"/>
    </location>
</feature>
<feature type="strand" evidence="19">
    <location>
        <begin position="558"/>
        <end position="560"/>
    </location>
</feature>
<feature type="strand" evidence="18">
    <location>
        <begin position="563"/>
        <end position="569"/>
    </location>
</feature>
<comment type="function">
    <text evidence="6 7 9">During the asexual blood stage, processes key proteins essential for merozoite egress and invasion of host erythrocytes (PubMed:29074775, PubMed:32109369). Cleaves and activates proteases SUB1 and SUB2 (PubMed:29074775, PubMed:32109369, PubMed:38969256). May process members of the EBL and Rh protein families (PubMed:32109369). Also cleaves apical membrane protein AMA1 (PubMed:29074775). During the mosquito vector stage and probably in ookinetes, cleaves CelTOS (PubMed:29074775).</text>
</comment>
<comment type="activity regulation">
    <text evidence="6 7">Inhibited by small molecule 49c (PubMed:29074775). Inhibited by small molecules WM382, WM4, and WM5 (PubMed:32109369).</text>
</comment>
<comment type="biophysicochemical properties">
    <phDependence>
        <text evidence="9">Active at pH 5.5.</text>
    </phDependence>
</comment>
<comment type="subcellular location">
    <subcellularLocation>
        <location evidence="1">Cytoplasmic vesicle</location>
        <location evidence="1">Secretory vesicle</location>
    </subcellularLocation>
    <text evidence="1">In schizonts, localizes to exonemes which are secretory vesicles that discharge their content during egress into the parasitophorous vacuole.</text>
</comment>
<comment type="PTM">
    <text evidence="7 8">Autocleaved into a p16 prodomain form and two mature forms p44 and p51.</text>
</comment>
<comment type="similarity">
    <text evidence="4">Belongs to the peptidase A1 family.</text>
</comment>
<protein>
    <recommendedName>
        <fullName evidence="10 11">Plasmepsin X</fullName>
        <shortName evidence="10">PfPMX</shortName>
        <ecNumber evidence="6 7 9">3.4.23.-</ecNumber>
    </recommendedName>
    <alternativeName>
        <fullName evidence="12">Plasmepsin 10</fullName>
    </alternativeName>
</protein>
<reference evidence="15" key="1">
    <citation type="journal article" date="2002" name="Nature">
        <title>Genome sequence of the human malaria parasite Plasmodium falciparum.</title>
        <authorList>
            <person name="Gardner M.J."/>
            <person name="Hall N."/>
            <person name="Fung E."/>
            <person name="White O."/>
            <person name="Berriman M."/>
            <person name="Hyman R.W."/>
            <person name="Carlton J.M."/>
            <person name="Pain A."/>
            <person name="Nelson K.E."/>
            <person name="Bowman S."/>
            <person name="Paulsen I.T."/>
            <person name="James K.D."/>
            <person name="Eisen J.A."/>
            <person name="Rutherford K.M."/>
            <person name="Salzberg S.L."/>
            <person name="Craig A."/>
            <person name="Kyes S."/>
            <person name="Chan M.-S."/>
            <person name="Nene V."/>
            <person name="Shallom S.J."/>
            <person name="Suh B."/>
            <person name="Peterson J."/>
            <person name="Angiuoli S."/>
            <person name="Pertea M."/>
            <person name="Allen J."/>
            <person name="Selengut J."/>
            <person name="Haft D."/>
            <person name="Mather M.W."/>
            <person name="Vaidya A.B."/>
            <person name="Martin D.M.A."/>
            <person name="Fairlamb A.H."/>
            <person name="Fraunholz M.J."/>
            <person name="Roos D.S."/>
            <person name="Ralph S.A."/>
            <person name="McFadden G.I."/>
            <person name="Cummings L.M."/>
            <person name="Subramanian G.M."/>
            <person name="Mungall C."/>
            <person name="Venter J.C."/>
            <person name="Carucci D.J."/>
            <person name="Hoffman S.L."/>
            <person name="Newbold C."/>
            <person name="Davis R.W."/>
            <person name="Fraser C.M."/>
            <person name="Barrell B.G."/>
        </authorList>
    </citation>
    <scope>NUCLEOTIDE SEQUENCE [LARGE SCALE GENOMIC DNA]</scope>
    <source>
        <strain evidence="15">3D7</strain>
    </source>
</reference>
<reference evidence="15" key="2">
    <citation type="journal article" date="2002" name="Nature">
        <title>Sequence of Plasmodium falciparum chromosomes 1, 3-9 and 13.</title>
        <authorList>
            <person name="Hall N."/>
            <person name="Pain A."/>
            <person name="Berriman M."/>
            <person name="Churcher C.M."/>
            <person name="Harris B."/>
            <person name="Harris D."/>
            <person name="Mungall K.L."/>
            <person name="Bowman S."/>
            <person name="Atkin R."/>
            <person name="Baker S."/>
            <person name="Barron A."/>
            <person name="Brooks K."/>
            <person name="Buckee C.O."/>
            <person name="Burrows C."/>
            <person name="Cherevach I."/>
            <person name="Chillingworth C."/>
            <person name="Chillingworth T."/>
            <person name="Christodoulou Z."/>
            <person name="Clark L."/>
            <person name="Clark R."/>
            <person name="Corton C."/>
            <person name="Cronin A."/>
            <person name="Davies R.M."/>
            <person name="Davis P."/>
            <person name="Dear P."/>
            <person name="Dearden F."/>
            <person name="Doggett J."/>
            <person name="Feltwell T."/>
            <person name="Goble A."/>
            <person name="Goodhead I."/>
            <person name="Gwilliam R."/>
            <person name="Hamlin N."/>
            <person name="Hance Z."/>
            <person name="Harper D."/>
            <person name="Hauser H."/>
            <person name="Hornsby T."/>
            <person name="Holroyd S."/>
            <person name="Horrocks P."/>
            <person name="Humphray S."/>
            <person name="Jagels K."/>
            <person name="James K.D."/>
            <person name="Johnson D."/>
            <person name="Kerhornou A."/>
            <person name="Knights A."/>
            <person name="Konfortov B."/>
            <person name="Kyes S."/>
            <person name="Larke N."/>
            <person name="Lawson D."/>
            <person name="Lennard N."/>
            <person name="Line A."/>
            <person name="Maddison M."/>
            <person name="Mclean J."/>
            <person name="Mooney P."/>
            <person name="Moule S."/>
            <person name="Murphy L."/>
            <person name="Oliver K."/>
            <person name="Ormond D."/>
            <person name="Price C."/>
            <person name="Quail M.A."/>
            <person name="Rabbinowitsch E."/>
            <person name="Rajandream M.A."/>
            <person name="Rutter S."/>
            <person name="Rutherford K.M."/>
            <person name="Sanders M."/>
            <person name="Simmonds M."/>
            <person name="Seeger K."/>
            <person name="Sharp S."/>
            <person name="Smith R."/>
            <person name="Squares R."/>
            <person name="Squares S."/>
            <person name="Stevens K."/>
            <person name="Taylor K."/>
            <person name="Tivey A."/>
            <person name="Unwin L."/>
            <person name="Whitehead S."/>
            <person name="Woodward J.R."/>
            <person name="Sulston J.E."/>
            <person name="Craig A."/>
            <person name="Newbold C."/>
            <person name="Barrell B.G."/>
        </authorList>
    </citation>
    <scope>NUCLEOTIDE SEQUENCE [LARGE SCALE GENOMIC DNA]</scope>
    <source>
        <strain evidence="15">3D7</strain>
    </source>
</reference>
<reference evidence="12" key="3">
    <citation type="journal article" date="2017" name="Science">
        <title>A multistage antimalarial targets the plasmepsins IX and X essential for invasion and egress.</title>
        <authorList>
            <person name="Pino P."/>
            <person name="Caldelari R."/>
            <person name="Mukherjee B."/>
            <person name="Vahokoski J."/>
            <person name="Klages N."/>
            <person name="Maco B."/>
            <person name="Collins C.R."/>
            <person name="Blackman M.J."/>
            <person name="Kursula I."/>
            <person name="Heussler V."/>
            <person name="Brochet M."/>
            <person name="Soldati-Favre D."/>
        </authorList>
    </citation>
    <scope>FUNCTION</scope>
    <scope>CATALYTIC ACTIVITY</scope>
    <scope>ACTIVITY REGULATION</scope>
    <scope>MUTAGENESIS OF ASP-266</scope>
</reference>
<reference evidence="12" key="4">
    <citation type="journal article" date="2020" name="Cell Host Microbe">
        <title>Dual Plasmepsin-Targeting Antimalarial Agents Disrupt Multiple Stages of the Malaria Parasite Life Cycle.</title>
        <authorList>
            <person name="Favuzza P."/>
            <person name="de Lera Ruiz M."/>
            <person name="Thompson J.K."/>
            <person name="Triglia T."/>
            <person name="Ngo A."/>
            <person name="Steel R.W.J."/>
            <person name="Vavrek M."/>
            <person name="Christensen J."/>
            <person name="Healer J."/>
            <person name="Boyce C."/>
            <person name="Guo Z."/>
            <person name="Hu M."/>
            <person name="Khan T."/>
            <person name="Murgolo N."/>
            <person name="Zhao L."/>
            <person name="Penington J.S."/>
            <person name="Reaksudsan K."/>
            <person name="Jarman K."/>
            <person name="Dietrich M.H."/>
            <person name="Richardson L."/>
            <person name="Guo K.Y."/>
            <person name="Lopaticki S."/>
            <person name="Tham W.H."/>
            <person name="Rottmann M."/>
            <person name="Papenfuss T."/>
            <person name="Robbins J.A."/>
            <person name="Boddey J.A."/>
            <person name="Sleebs B.E."/>
            <person name="Sabroux H.J."/>
            <person name="McCauley J.A."/>
            <person name="Olsen D.B."/>
            <person name="Cowman A.F."/>
        </authorList>
    </citation>
    <scope>FUNCTION</scope>
    <scope>CATALYTIC ACTIVITY</scope>
    <scope>ACTIVITY REGULATION</scope>
    <scope>PROTEOLYTIC CLEAVAGE</scope>
</reference>
<reference key="5">
    <citation type="journal article" date="2024" name="Biochim. Biophys. Acta">
        <title>The malaria parasite egress protease SUB1 is activated through precise, plasmepsin X-mediated cleavage of the SUB1 prodomain.</title>
        <authorList>
            <person name="Withers-Martinez C."/>
            <person name="George R."/>
            <person name="Maslen S."/>
            <person name="Jean L."/>
            <person name="Hackett F."/>
            <person name="Skehel M."/>
            <person name="Blackman M.J."/>
        </authorList>
    </citation>
    <scope>FUNCTION</scope>
    <scope>CATALYTIC ACTIVITY</scope>
    <scope>BIOPHYSICOCHEMICAL PROPERTIES</scope>
</reference>
<reference evidence="16" key="6">
    <citation type="journal article" date="2022" name="Protein Sci.">
        <title>Structures of plasmepsin X from Plasmodium falciparum reveal a novel inactivation mechanism of the zymogen and molecular basis for binding of inhibitors in mature enzyme.</title>
        <authorList>
            <person name="Kesari P."/>
            <person name="Deshmukh A."/>
            <person name="Pahelkar N."/>
            <person name="Suryawanshi A.B."/>
            <person name="Rathore I."/>
            <person name="Mishra V."/>
            <person name="Dupuis J.H."/>
            <person name="Xiao H."/>
            <person name="Gustchina A."/>
            <person name="Abendroth J."/>
            <person name="Labaied M."/>
            <person name="Yada R.Y."/>
            <person name="Wlodawer A."/>
            <person name="Edwards T.E."/>
            <person name="Lorimer D.D."/>
            <person name="Bhaumik P."/>
        </authorList>
    </citation>
    <scope>X-RAY CRYSTALLOGRAPHY (2.10 ANGSTROMS) OF 28-573</scope>
    <scope>DISULFIDE BONDS</scope>
    <scope>GLYCOSYLATION AT ASN-334</scope>
    <scope>PROTEOLYTIC CLEAVAGE</scope>
</reference>
<sequence length="573" mass="65114">MKRISPLNTLFYLSLFFSYTFKGLKCTRIYKIGTKALPCSECHDVFDCTGCLFEEKESSHVIPLKLNKKNPNDHKKLQKHHESLKLGDVKYYVNRGEGISGSLGTSSGNTLDDMDLINEEINKKRTNAQLDEKNFLDFTTYNKNKAQDISDHLSDIQKHVYEQDAQKGNKNFTNNENNSDNENNSDNENNSDNENNLDNENNLDNENNSDNSSIEKNFIALENKNATVEQTKENIFLVPLKHLRDSQFVGELLVGTPPQTVYPIFDTGSTNVWVVTTACEEESCKKVRRYDPNKSKTFRRSFIEKNLHIVFGSGSISGSVGTDTFMLGKHLVRNQTFGLVESESNNNKNGGDNIFDYISFEGIVGLGFPGMLSAGNIPFFDNLLKQNPNVDPQFSFYISPYDGKSTLIIGGISKSFYEGDIYMLPVLKESYWEVKLDELYIGKERICCDEESYVIFDTGTSYNTMPSSQMKTFLNLIHSTACTEQNYKDILKSYPIIKYVFGELIIELHPEEYMILNDDVCMPAYMQIDVPSERNHAYLLGSLSFMRNFFTVFVRGTESRPSMVGVARAKSKN</sequence>